<sequence length="600" mass="66143">MAALAALAKKVWSARRLLVLLLVPLALLPILFALPPKEGRCLYVILLMAVYWCTEALPLSVTALLPIILFPFMGILPSSKVCPQYFLDTNFLFLSGLIMASAIEEWNLHRRIALKVLMLVGVQPARLILGMMVTTSFLSMWLSNTASTAMMLPIASAILKSLFGQREARKDLPREGDESTAAVQGNGLRTVPTEMQFLASSEGGHTEDAEAPMELPDDSKEEEHRRNIWKGFLISIPYSASIGGTATLTGTAPNLILLGQLKSFFPQCDVVNFGSWFIFAFPLMLLFLLVGWLWISFLYGGMSWRSWRKKKSKIRADAEDQAKAVIQEEFQNLGPIKFAEQAVFILFCTFAILLFSRDPKFIPGWASLFAPGFVSDAVTGVAIVTILFFFPSQKPSLKWWFDFKAPNSETEPLLSWKKAQETVPWNIILLLGGGFAMAKGCEESGLSAWIGGQLHPLEHVPPLLAVLLITVVIAFFTEFASNTATIIIFLPVLAELAIRLHVHPLYLMIPGTVGCSYAFMLPVSTPPNSIAFSTGHLLVKDMVRTGLLMNLMGVLLLSLAMNTWAQTIFQLGTFPDWANTHAANATALPPALTNNTVQTF</sequence>
<dbReference type="EMBL" id="AF306491">
    <property type="protein sequence ID" value="AAK49898.1"/>
    <property type="molecule type" value="mRNA"/>
</dbReference>
<dbReference type="EMBL" id="BC026803">
    <property type="protein sequence ID" value="AAH26803.1"/>
    <property type="molecule type" value="mRNA"/>
</dbReference>
<dbReference type="CCDS" id="CCDS17081.1"/>
<dbReference type="RefSeq" id="NP_473396.1">
    <property type="nucleotide sequence ID" value="NM_054055.2"/>
</dbReference>
<dbReference type="SMR" id="Q91Y63"/>
<dbReference type="BioGRID" id="227779">
    <property type="interactions" value="1"/>
</dbReference>
<dbReference type="FunCoup" id="Q91Y63">
    <property type="interactions" value="211"/>
</dbReference>
<dbReference type="STRING" id="10090.ENSMUSP00000029208"/>
<dbReference type="GlyCosmos" id="Q91Y63">
    <property type="glycosylation" value="2 sites, No reported glycans"/>
</dbReference>
<dbReference type="GlyGen" id="Q91Y63">
    <property type="glycosylation" value="2 sites"/>
</dbReference>
<dbReference type="iPTMnet" id="Q91Y63"/>
<dbReference type="PhosphoSitePlus" id="Q91Y63"/>
<dbReference type="jPOST" id="Q91Y63"/>
<dbReference type="PaxDb" id="10090-ENSMUSP00000029208"/>
<dbReference type="ProteomicsDB" id="260965"/>
<dbReference type="Antibodypedia" id="13229">
    <property type="antibodies" value="124 antibodies from 24 providers"/>
</dbReference>
<dbReference type="DNASU" id="114644"/>
<dbReference type="Ensembl" id="ENSMUST00000029208.15">
    <property type="protein sequence ID" value="ENSMUSP00000029208.9"/>
    <property type="gene ID" value="ENSMUSG00000018459.16"/>
</dbReference>
<dbReference type="GeneID" id="114644"/>
<dbReference type="KEGG" id="mmu:114644"/>
<dbReference type="UCSC" id="uc008nxs.1">
    <property type="organism name" value="mouse"/>
</dbReference>
<dbReference type="AGR" id="MGI:2149635"/>
<dbReference type="CTD" id="64849"/>
<dbReference type="MGI" id="MGI:2149635">
    <property type="gene designation" value="Slc13a3"/>
</dbReference>
<dbReference type="VEuPathDB" id="HostDB:ENSMUSG00000018459"/>
<dbReference type="eggNOG" id="KOG1281">
    <property type="taxonomic scope" value="Eukaryota"/>
</dbReference>
<dbReference type="GeneTree" id="ENSGT01030000234550"/>
<dbReference type="InParanoid" id="Q91Y63"/>
<dbReference type="OMA" id="AINTWAM"/>
<dbReference type="OrthoDB" id="6493944at2759"/>
<dbReference type="PhylomeDB" id="Q91Y63"/>
<dbReference type="TreeFam" id="TF312913"/>
<dbReference type="Reactome" id="R-MMU-433137">
    <property type="pathway name" value="Sodium-coupled sulphate, di- and tri-carboxylate transporters"/>
</dbReference>
<dbReference type="BioGRID-ORCS" id="114644">
    <property type="hits" value="2 hits in 80 CRISPR screens"/>
</dbReference>
<dbReference type="ChiTaRS" id="Slc13a3">
    <property type="organism name" value="mouse"/>
</dbReference>
<dbReference type="PRO" id="PR:Q91Y63"/>
<dbReference type="Proteomes" id="UP000000589">
    <property type="component" value="Chromosome 2"/>
</dbReference>
<dbReference type="RNAct" id="Q91Y63">
    <property type="molecule type" value="protein"/>
</dbReference>
<dbReference type="Bgee" id="ENSMUSG00000018459">
    <property type="expression patterns" value="Expressed in adult mammalian kidney and 213 other cell types or tissues"/>
</dbReference>
<dbReference type="ExpressionAtlas" id="Q91Y63">
    <property type="expression patterns" value="baseline and differential"/>
</dbReference>
<dbReference type="GO" id="GO:0016323">
    <property type="term" value="C:basolateral plasma membrane"/>
    <property type="evidence" value="ECO:0007669"/>
    <property type="project" value="Ensembl"/>
</dbReference>
<dbReference type="GO" id="GO:0016020">
    <property type="term" value="C:membrane"/>
    <property type="evidence" value="ECO:0000314"/>
    <property type="project" value="MGI"/>
</dbReference>
<dbReference type="GO" id="GO:0005886">
    <property type="term" value="C:plasma membrane"/>
    <property type="evidence" value="ECO:0000266"/>
    <property type="project" value="MGI"/>
</dbReference>
<dbReference type="GO" id="GO:0015139">
    <property type="term" value="F:alpha-ketoglutarate transmembrane transporter activity"/>
    <property type="evidence" value="ECO:0007669"/>
    <property type="project" value="Ensembl"/>
</dbReference>
<dbReference type="GO" id="GO:0042887">
    <property type="term" value="F:amide transmembrane transporter activity"/>
    <property type="evidence" value="ECO:0000266"/>
    <property type="project" value="MGI"/>
</dbReference>
<dbReference type="GO" id="GO:0005310">
    <property type="term" value="F:dicarboxylic acid transmembrane transporter activity"/>
    <property type="evidence" value="ECO:0000266"/>
    <property type="project" value="MGI"/>
</dbReference>
<dbReference type="GO" id="GO:0034634">
    <property type="term" value="F:glutathione transmembrane transporter activity"/>
    <property type="evidence" value="ECO:0007669"/>
    <property type="project" value="Ensembl"/>
</dbReference>
<dbReference type="GO" id="GO:0015362">
    <property type="term" value="F:high-affinity sodium:dicarboxylate symporter activity"/>
    <property type="evidence" value="ECO:0000314"/>
    <property type="project" value="MGI"/>
</dbReference>
<dbReference type="GO" id="GO:0072349">
    <property type="term" value="F:modified amino acid transmembrane transporter activity"/>
    <property type="evidence" value="ECO:0000266"/>
    <property type="project" value="MGI"/>
</dbReference>
<dbReference type="GO" id="GO:0005343">
    <property type="term" value="F:organic acid:sodium symporter activity"/>
    <property type="evidence" value="ECO:0000266"/>
    <property type="project" value="MGI"/>
</dbReference>
<dbReference type="GO" id="GO:0015141">
    <property type="term" value="F:succinate transmembrane transporter activity"/>
    <property type="evidence" value="ECO:0000314"/>
    <property type="project" value="ARUK-UCL"/>
</dbReference>
<dbReference type="GO" id="GO:0046942">
    <property type="term" value="P:carboxylic acid transport"/>
    <property type="evidence" value="ECO:0000266"/>
    <property type="project" value="MGI"/>
</dbReference>
<dbReference type="GO" id="GO:0006835">
    <property type="term" value="P:dicarboxylic acid transport"/>
    <property type="evidence" value="ECO:0000314"/>
    <property type="project" value="MGI"/>
</dbReference>
<dbReference type="GO" id="GO:0071422">
    <property type="term" value="P:succinate transmembrane transport"/>
    <property type="evidence" value="ECO:0000314"/>
    <property type="project" value="ARUK-UCL"/>
</dbReference>
<dbReference type="CDD" id="cd01115">
    <property type="entry name" value="SLC13_permease"/>
    <property type="match status" value="1"/>
</dbReference>
<dbReference type="InterPro" id="IPR001898">
    <property type="entry name" value="SLC13A/DASS"/>
</dbReference>
<dbReference type="PANTHER" id="PTHR10283:SF62">
    <property type="entry name" value="NA(+)_DICARBOXYLATE COTRANSPORTER 3"/>
    <property type="match status" value="1"/>
</dbReference>
<dbReference type="PANTHER" id="PTHR10283">
    <property type="entry name" value="SOLUTE CARRIER FAMILY 13 MEMBER"/>
    <property type="match status" value="1"/>
</dbReference>
<dbReference type="Pfam" id="PF00939">
    <property type="entry name" value="Na_sulph_symp"/>
    <property type="match status" value="1"/>
</dbReference>
<evidence type="ECO:0000250" key="1">
    <source>
        <dbReference type="UniProtKB" id="Q8WWT9"/>
    </source>
</evidence>
<evidence type="ECO:0000255" key="2"/>
<evidence type="ECO:0000269" key="3">
    <source>
    </source>
</evidence>
<evidence type="ECO:0000269" key="4">
    <source>
    </source>
</evidence>
<evidence type="ECO:0000303" key="5">
    <source>
    </source>
</evidence>
<evidence type="ECO:0000305" key="6"/>
<proteinExistence type="evidence at protein level"/>
<keyword id="KW-1003">Cell membrane</keyword>
<keyword id="KW-0325">Glycoprotein</keyword>
<keyword id="KW-0406">Ion transport</keyword>
<keyword id="KW-0472">Membrane</keyword>
<keyword id="KW-1185">Reference proteome</keyword>
<keyword id="KW-0915">Sodium</keyword>
<keyword id="KW-0739">Sodium transport</keyword>
<keyword id="KW-0769">Symport</keyword>
<keyword id="KW-0812">Transmembrane</keyword>
<keyword id="KW-1133">Transmembrane helix</keyword>
<keyword id="KW-0813">Transport</keyword>
<comment type="function">
    <text evidence="1 3 4">High-affinity sodium-dicarboxylate cotransporter that accepts a range of substrates with 4-6 carbon atoms, such as the citric acid cycle intermediates succinate and alpha-ketoglutarate (2-oxoglutarate), as well as other compounds including N-acetyl-L-aspartate (PubMed:11287335). Transports the dicarboxylate into the cell with a probable stoichiometry of 3 Na(+) for 1 divalent dicarboxylate, rendering the process electrogenic (PubMed:11287335). Can transport citrate in a Na(+)-dependent manner, recognizing the divalent form of citrate rather than the trivalent form which is normally found in blood (By similarity). Imports itaconate in hepatocytes leading to activation of TFEB-dependent lysosomal biogenesis involved in antibacterial innate immune response.</text>
</comment>
<comment type="catalytic activity">
    <reaction evidence="3">
        <text>succinate(out) + 3 Na(+)(out) = succinate(in) + 3 Na(+)(in)</text>
        <dbReference type="Rhea" id="RHEA:71919"/>
        <dbReference type="ChEBI" id="CHEBI:29101"/>
        <dbReference type="ChEBI" id="CHEBI:30031"/>
    </reaction>
</comment>
<comment type="catalytic activity">
    <reaction evidence="3">
        <text>2-oxoglutarate(out) + 3 Na(+)(out) = 2-oxoglutarate(in) + 3 Na(+)(in)</text>
        <dbReference type="Rhea" id="RHEA:71939"/>
        <dbReference type="ChEBI" id="CHEBI:16810"/>
        <dbReference type="ChEBI" id="CHEBI:29101"/>
    </reaction>
</comment>
<comment type="catalytic activity">
    <reaction evidence="1">
        <text>N-acetyl-L-aspartate(out) + 3 Na(+)(out) = N-acetyl-L-aspartate(in) + 3 Na(+)(in)</text>
        <dbReference type="Rhea" id="RHEA:71947"/>
        <dbReference type="ChEBI" id="CHEBI:16953"/>
        <dbReference type="ChEBI" id="CHEBI:29101"/>
    </reaction>
</comment>
<comment type="catalytic activity">
    <reaction evidence="3">
        <text>fumarate(out) + 3 Na(+)(out) = fumarate(in) + 3 Na(+)(in)</text>
        <dbReference type="Rhea" id="RHEA:71931"/>
        <dbReference type="ChEBI" id="CHEBI:29101"/>
        <dbReference type="ChEBI" id="CHEBI:29806"/>
    </reaction>
</comment>
<comment type="catalytic activity">
    <reaction evidence="1">
        <text>glutarate(out) + 3 Na(+)(out) = glutarate(in) + 3 Na(+)(in)</text>
        <dbReference type="Rhea" id="RHEA:71955"/>
        <dbReference type="ChEBI" id="CHEBI:29101"/>
        <dbReference type="ChEBI" id="CHEBI:30921"/>
    </reaction>
</comment>
<comment type="catalytic activity">
    <reaction evidence="3">
        <text>2,2-dimethylsuccinate(out) + 3 Na(+)(out) = 2,2-dimethylsuccinate(in) + 3 Na(+)(in)</text>
        <dbReference type="Rhea" id="RHEA:72287"/>
        <dbReference type="ChEBI" id="CHEBI:29101"/>
        <dbReference type="ChEBI" id="CHEBI:191383"/>
    </reaction>
</comment>
<comment type="catalytic activity">
    <reaction evidence="3">
        <text>2,3-dimethylsuccinate(out) + 3 Na(+)(out) = 2,3-dimethylsuccinate(in) + 3 Na(+)(in)</text>
        <dbReference type="Rhea" id="RHEA:72291"/>
        <dbReference type="ChEBI" id="CHEBI:29101"/>
        <dbReference type="ChEBI" id="CHEBI:191384"/>
    </reaction>
</comment>
<comment type="catalytic activity">
    <reaction evidence="3">
        <text>malate(out) + 3 Na(+)(out) = malate(in) + 3 Na(+)(in)</text>
        <dbReference type="Rhea" id="RHEA:72295"/>
        <dbReference type="ChEBI" id="CHEBI:15595"/>
        <dbReference type="ChEBI" id="CHEBI:29101"/>
    </reaction>
</comment>
<comment type="catalytic activity">
    <reaction evidence="4">
        <text>itaconate(out) + 3 Na(+)(out) = itaconate(in) + 3 Na(+)(in)</text>
        <dbReference type="Rhea" id="RHEA:82295"/>
        <dbReference type="ChEBI" id="CHEBI:17240"/>
        <dbReference type="ChEBI" id="CHEBI:29101"/>
    </reaction>
</comment>
<comment type="biophysicochemical properties">
    <kinetics>
        <KM evidence="3">100 uM for succinate</KM>
    </kinetics>
</comment>
<comment type="subcellular location">
    <subcellularLocation>
        <location>Cell membrane</location>
        <topology>Multi-pass membrane protein</topology>
    </subcellularLocation>
</comment>
<comment type="tissue specificity">
    <text evidence="3">Highly expressed in kidney, and at much lower levels in brain.</text>
</comment>
<comment type="similarity">
    <text evidence="6">Belongs to the SLC13A/DASS transporter (TC 2.A.47) family. NADC subfamily.</text>
</comment>
<name>S13A3_MOUSE</name>
<feature type="chain" id="PRO_0000172493" description="Na(+)/dicarboxylate cotransporter 3">
    <location>
        <begin position="1"/>
        <end position="600"/>
    </location>
</feature>
<feature type="topological domain" description="Cytoplasmic" evidence="2">
    <location>
        <begin position="1"/>
        <end position="16"/>
    </location>
</feature>
<feature type="transmembrane region" description="Helical" evidence="2">
    <location>
        <begin position="17"/>
        <end position="37"/>
    </location>
</feature>
<feature type="topological domain" description="Extracellular" evidence="2">
    <location>
        <begin position="38"/>
        <end position="55"/>
    </location>
</feature>
<feature type="transmembrane region" description="Helical" evidence="2">
    <location>
        <begin position="56"/>
        <end position="76"/>
    </location>
</feature>
<feature type="topological domain" description="Cytoplasmic" evidence="2">
    <location>
        <begin position="77"/>
        <end position="82"/>
    </location>
</feature>
<feature type="transmembrane region" description="Helical" evidence="2">
    <location>
        <begin position="83"/>
        <end position="103"/>
    </location>
</feature>
<feature type="topological domain" description="Extracellular" evidence="2">
    <location>
        <begin position="104"/>
        <end position="137"/>
    </location>
</feature>
<feature type="transmembrane region" description="Helical" evidence="2">
    <location>
        <begin position="138"/>
        <end position="158"/>
    </location>
</feature>
<feature type="topological domain" description="Cytoplasmic" evidence="2">
    <location>
        <begin position="159"/>
        <end position="229"/>
    </location>
</feature>
<feature type="transmembrane region" description="Helical" evidence="2">
    <location>
        <begin position="230"/>
        <end position="250"/>
    </location>
</feature>
<feature type="topological domain" description="Extracellular" evidence="2">
    <location>
        <begin position="251"/>
        <end position="278"/>
    </location>
</feature>
<feature type="transmembrane region" description="Helical" evidence="2">
    <location>
        <begin position="279"/>
        <end position="299"/>
    </location>
</feature>
<feature type="topological domain" description="Cytoplasmic" evidence="2">
    <location>
        <begin position="300"/>
        <end position="336"/>
    </location>
</feature>
<feature type="transmembrane region" description="Helical" evidence="2">
    <location>
        <begin position="337"/>
        <end position="357"/>
    </location>
</feature>
<feature type="topological domain" description="Extracellular" evidence="2">
    <location>
        <begin position="358"/>
        <end position="372"/>
    </location>
</feature>
<feature type="transmembrane region" description="Helical" evidence="2">
    <location>
        <begin position="373"/>
        <end position="393"/>
    </location>
</feature>
<feature type="topological domain" description="Cytoplasmic" evidence="2">
    <location>
        <begin position="394"/>
        <end position="422"/>
    </location>
</feature>
<feature type="intramembrane region" description="Helical" evidence="2">
    <location>
        <begin position="423"/>
        <end position="443"/>
    </location>
</feature>
<feature type="topological domain" description="Cytoplasmic" evidence="2">
    <location>
        <begin position="444"/>
        <end position="461"/>
    </location>
</feature>
<feature type="transmembrane region" description="Helical" evidence="2">
    <location>
        <begin position="462"/>
        <end position="482"/>
    </location>
</feature>
<feature type="topological domain" description="Extracellular" evidence="2">
    <location>
        <begin position="483"/>
        <end position="505"/>
    </location>
</feature>
<feature type="transmembrane region" description="Helical" evidence="2">
    <location>
        <begin position="506"/>
        <end position="526"/>
    </location>
</feature>
<feature type="topological domain" description="Cytoplasmic" evidence="2">
    <location>
        <begin position="527"/>
        <end position="546"/>
    </location>
</feature>
<feature type="transmembrane region" description="Helical" evidence="2">
    <location>
        <begin position="547"/>
        <end position="567"/>
    </location>
</feature>
<feature type="topological domain" description="Extracellular" evidence="2">
    <location>
        <begin position="568"/>
        <end position="600"/>
    </location>
</feature>
<feature type="glycosylation site" description="N-linked (GlcNAc...) asparagine" evidence="2">
    <location>
        <position position="584"/>
    </location>
</feature>
<feature type="glycosylation site" description="N-linked (GlcNAc...) asparagine" evidence="2">
    <location>
        <position position="594"/>
    </location>
</feature>
<protein>
    <recommendedName>
        <fullName>Na(+)/dicarboxylate cotransporter 3</fullName>
        <shortName>NaDC-3</shortName>
        <shortName evidence="5">mNaDC3</shortName>
    </recommendedName>
    <alternativeName>
        <fullName>Na(+)-coupled carboxylate transporter 3</fullName>
        <shortName>NaC3</shortName>
    </alternativeName>
    <alternativeName>
        <fullName>Sodium-dependent high-affinity dicarboxylate transporter 2</fullName>
    </alternativeName>
    <alternativeName>
        <fullName>Solute carrier family 13 member 3</fullName>
    </alternativeName>
</protein>
<accession>Q91Y63</accession>
<organism>
    <name type="scientific">Mus musculus</name>
    <name type="common">Mouse</name>
    <dbReference type="NCBI Taxonomy" id="10090"/>
    <lineage>
        <taxon>Eukaryota</taxon>
        <taxon>Metazoa</taxon>
        <taxon>Chordata</taxon>
        <taxon>Craniata</taxon>
        <taxon>Vertebrata</taxon>
        <taxon>Euteleostomi</taxon>
        <taxon>Mammalia</taxon>
        <taxon>Eutheria</taxon>
        <taxon>Euarchontoglires</taxon>
        <taxon>Glires</taxon>
        <taxon>Rodentia</taxon>
        <taxon>Myomorpha</taxon>
        <taxon>Muroidea</taxon>
        <taxon>Muridae</taxon>
        <taxon>Murinae</taxon>
        <taxon>Mus</taxon>
        <taxon>Mus</taxon>
    </lineage>
</organism>
<gene>
    <name type="primary">Slc13a3</name>
    <name type="synonym">Nadc3</name>
    <name type="synonym">Sdct2</name>
</gene>
<reference key="1">
    <citation type="journal article" date="2001" name="Am. J. Physiol.">
        <title>Cloning and functional characterization of a high-affinity Na(+)/dicarboxylate cotransporter from mouse brain.</title>
        <authorList>
            <person name="Pajor A.M."/>
            <person name="Gangula R."/>
            <person name="Yao X."/>
        </authorList>
    </citation>
    <scope>NUCLEOTIDE SEQUENCE [MRNA]</scope>
    <scope>TISSUE SPECIFICITY</scope>
    <scope>FUNCTION</scope>
    <scope>TRANSPORT ACTIVITY</scope>
    <scope>BIOPHYSICOCHEMICAL PROPERTIES</scope>
    <source>
        <tissue>Brain</tissue>
    </source>
</reference>
<reference key="2">
    <citation type="journal article" date="2004" name="Genome Res.">
        <title>The status, quality, and expansion of the NIH full-length cDNA project: the Mammalian Gene Collection (MGC).</title>
        <authorList>
            <consortium name="The MGC Project Team"/>
        </authorList>
    </citation>
    <scope>NUCLEOTIDE SEQUENCE [LARGE SCALE MRNA]</scope>
    <source>
        <tissue>Kidney</tissue>
    </source>
</reference>
<reference key="3">
    <citation type="journal article" date="2010" name="Cell">
        <title>A tissue-specific atlas of mouse protein phosphorylation and expression.</title>
        <authorList>
            <person name="Huttlin E.L."/>
            <person name="Jedrychowski M.P."/>
            <person name="Elias J.E."/>
            <person name="Goswami T."/>
            <person name="Rad R."/>
            <person name="Beausoleil S.A."/>
            <person name="Villen J."/>
            <person name="Haas W."/>
            <person name="Sowa M.E."/>
            <person name="Gygi S.P."/>
        </authorList>
    </citation>
    <scope>IDENTIFICATION BY MASS SPECTROMETRY [LARGE SCALE ANALYSIS]</scope>
    <source>
        <tissue>Brain</tissue>
        <tissue>Kidney</tissue>
    </source>
</reference>
<reference key="4">
    <citation type="journal article" date="2024" name="Dev. Cell">
        <title>Itaconate uptake via SLC13A3 improves hepatic antibacterial innate immunity.</title>
        <authorList>
            <person name="Chen C."/>
            <person name="Liu C."/>
            <person name="Sun P."/>
            <person name="Zhang Z."/>
            <person name="Wang Z."/>
            <person name="Liu P."/>
            <person name="Li X."/>
        </authorList>
    </citation>
    <scope>FUNCTION</scope>
    <scope>TRANSPORTER ACTIVITY</scope>
</reference>